<reference key="1">
    <citation type="journal article" date="2004" name="Nature">
        <title>Genome evolution in yeasts.</title>
        <authorList>
            <person name="Dujon B."/>
            <person name="Sherman D."/>
            <person name="Fischer G."/>
            <person name="Durrens P."/>
            <person name="Casaregola S."/>
            <person name="Lafontaine I."/>
            <person name="de Montigny J."/>
            <person name="Marck C."/>
            <person name="Neuveglise C."/>
            <person name="Talla E."/>
            <person name="Goffard N."/>
            <person name="Frangeul L."/>
            <person name="Aigle M."/>
            <person name="Anthouard V."/>
            <person name="Babour A."/>
            <person name="Barbe V."/>
            <person name="Barnay S."/>
            <person name="Blanchin S."/>
            <person name="Beckerich J.-M."/>
            <person name="Beyne E."/>
            <person name="Bleykasten C."/>
            <person name="Boisrame A."/>
            <person name="Boyer J."/>
            <person name="Cattolico L."/>
            <person name="Confanioleri F."/>
            <person name="de Daruvar A."/>
            <person name="Despons L."/>
            <person name="Fabre E."/>
            <person name="Fairhead C."/>
            <person name="Ferry-Dumazet H."/>
            <person name="Groppi A."/>
            <person name="Hantraye F."/>
            <person name="Hennequin C."/>
            <person name="Jauniaux N."/>
            <person name="Joyet P."/>
            <person name="Kachouri R."/>
            <person name="Kerrest A."/>
            <person name="Koszul R."/>
            <person name="Lemaire M."/>
            <person name="Lesur I."/>
            <person name="Ma L."/>
            <person name="Muller H."/>
            <person name="Nicaud J.-M."/>
            <person name="Nikolski M."/>
            <person name="Oztas S."/>
            <person name="Ozier-Kalogeropoulos O."/>
            <person name="Pellenz S."/>
            <person name="Potier S."/>
            <person name="Richard G.-F."/>
            <person name="Straub M.-L."/>
            <person name="Suleau A."/>
            <person name="Swennen D."/>
            <person name="Tekaia F."/>
            <person name="Wesolowski-Louvel M."/>
            <person name="Westhof E."/>
            <person name="Wirth B."/>
            <person name="Zeniou-Meyer M."/>
            <person name="Zivanovic Y."/>
            <person name="Bolotin-Fukuhara M."/>
            <person name="Thierry A."/>
            <person name="Bouchier C."/>
            <person name="Caudron B."/>
            <person name="Scarpelli C."/>
            <person name="Gaillardin C."/>
            <person name="Weissenbach J."/>
            <person name="Wincker P."/>
            <person name="Souciet J.-L."/>
        </authorList>
    </citation>
    <scope>NUCLEOTIDE SEQUENCE [LARGE SCALE GENOMIC DNA]</scope>
    <source>
        <strain>ATCC 2001 / BCRC 20586 / JCM 3761 / NBRC 0622 / NRRL Y-65 / CBS 138</strain>
    </source>
</reference>
<feature type="chain" id="PRO_0000367538" description="SAGA-associated factor 11">
    <location>
        <begin position="1"/>
        <end position="99"/>
    </location>
</feature>
<feature type="zinc finger region" description="SGF11-type" evidence="1">
    <location>
        <begin position="71"/>
        <end position="92"/>
    </location>
</feature>
<comment type="function">
    <text evidence="1">Functions as a component of the transcription regulatory histone acetylation (HAT) complex SAGA. At the promoters, SAGA is required for recruitment of the basal transcription machinery. It influences RNA polymerase II transcriptional activity through different activities such as TBP interaction and promoter selectivity, interaction with transcription activators, and chromatin modification through histone acetylation and deubiquitination. SAGA acetylates nucleosomal histone H3 to some extent (to form H3K9ac, H3K14ac, H3K18ac and H3K23ac). SAGA interacts with DNA via upstream activating sequences (UASs). Involved in transcriptional regulation of a subset of SAGA-regulated genes. Within the SAGA complex, participates in a subcomplex, that specifically deubiquitinates histones H2B.</text>
</comment>
<comment type="subunit">
    <text evidence="1">Component of the 1.8 MDa SAGA transcription coactivator-HAT complex. SAGA is built of 5 distinct domains with specialized functions. Within the SAGA complex, SUS1, SGF11, SGF73 and UBP8 form an additional subcomplex of SAGA called the DUB module (deubiquitination module). Interacts directly with SGF73, SUS1 and UBP8.</text>
</comment>
<comment type="subcellular location">
    <subcellularLocation>
        <location evidence="1">Nucleus</location>
    </subcellularLocation>
</comment>
<comment type="domain">
    <text evidence="1">The long N-terminal helix forms part of the 'assembly lobe' of the SAGA deubiquitination module.</text>
</comment>
<comment type="domain">
    <text evidence="1">The C-terminal SGF11-type zinc-finger domain together with the C-terminal catalytic domain of UBP8 forms the 'catalytic lobe' of the SAGA deubiquitination module.</text>
</comment>
<comment type="similarity">
    <text evidence="1">Belongs to the SGF11 family.</text>
</comment>
<dbReference type="EMBL" id="CR380958">
    <property type="protein sequence ID" value="CAG62296.1"/>
    <property type="molecule type" value="Genomic_DNA"/>
</dbReference>
<dbReference type="RefSeq" id="XP_449322.1">
    <property type="nucleotide sequence ID" value="XM_449322.1"/>
</dbReference>
<dbReference type="SMR" id="Q6FKC2"/>
<dbReference type="FunCoup" id="Q6FKC2">
    <property type="interactions" value="314"/>
</dbReference>
<dbReference type="STRING" id="284593.Q6FKC2"/>
<dbReference type="EnsemblFungi" id="CAGL0L12738g-T">
    <property type="protein sequence ID" value="CAGL0L12738g-T-p1"/>
    <property type="gene ID" value="CAGL0L12738g"/>
</dbReference>
<dbReference type="KEGG" id="cgr:2890608"/>
<dbReference type="CGD" id="CAL0135254">
    <property type="gene designation" value="SGF11"/>
</dbReference>
<dbReference type="VEuPathDB" id="FungiDB:B1J91_L12738g"/>
<dbReference type="VEuPathDB" id="FungiDB:CAGL0L12738g"/>
<dbReference type="eggNOG" id="KOG2612">
    <property type="taxonomic scope" value="Eukaryota"/>
</dbReference>
<dbReference type="HOGENOM" id="CLU_2320099_0_0_1"/>
<dbReference type="InParanoid" id="Q6FKC2"/>
<dbReference type="OMA" id="SSQYFHC"/>
<dbReference type="Proteomes" id="UP000002428">
    <property type="component" value="Chromosome L"/>
</dbReference>
<dbReference type="GO" id="GO:0071819">
    <property type="term" value="C:DUBm complex"/>
    <property type="evidence" value="ECO:0007669"/>
    <property type="project" value="UniProtKB-UniRule"/>
</dbReference>
<dbReference type="GO" id="GO:0000124">
    <property type="term" value="C:SAGA complex"/>
    <property type="evidence" value="ECO:0007669"/>
    <property type="project" value="UniProtKB-UniRule"/>
</dbReference>
<dbReference type="GO" id="GO:0046695">
    <property type="term" value="C:SLIK (SAGA-like) complex"/>
    <property type="evidence" value="ECO:0007669"/>
    <property type="project" value="EnsemblFungi"/>
</dbReference>
<dbReference type="GO" id="GO:0008047">
    <property type="term" value="F:enzyme activator activity"/>
    <property type="evidence" value="ECO:0007669"/>
    <property type="project" value="EnsemblFungi"/>
</dbReference>
<dbReference type="GO" id="GO:0003713">
    <property type="term" value="F:transcription coactivator activity"/>
    <property type="evidence" value="ECO:0007669"/>
    <property type="project" value="UniProtKB-UniRule"/>
</dbReference>
<dbReference type="GO" id="GO:0008270">
    <property type="term" value="F:zinc ion binding"/>
    <property type="evidence" value="ECO:0007669"/>
    <property type="project" value="UniProtKB-UniRule"/>
</dbReference>
<dbReference type="GO" id="GO:0006338">
    <property type="term" value="P:chromatin remodeling"/>
    <property type="evidence" value="ECO:0007669"/>
    <property type="project" value="GOC"/>
</dbReference>
<dbReference type="GO" id="GO:0006357">
    <property type="term" value="P:regulation of transcription by RNA polymerase II"/>
    <property type="evidence" value="ECO:0007669"/>
    <property type="project" value="EnsemblFungi"/>
</dbReference>
<dbReference type="Gene3D" id="1.10.287.210">
    <property type="match status" value="1"/>
</dbReference>
<dbReference type="Gene3D" id="3.30.160.60">
    <property type="entry name" value="Classic Zinc Finger"/>
    <property type="match status" value="1"/>
</dbReference>
<dbReference type="HAMAP" id="MF_03047">
    <property type="entry name" value="Sgf11"/>
    <property type="match status" value="1"/>
</dbReference>
<dbReference type="InterPro" id="IPR013246">
    <property type="entry name" value="SAGA_su_Sgf11"/>
</dbReference>
<dbReference type="InterPro" id="IPR041216">
    <property type="entry name" value="Sgf11_N"/>
</dbReference>
<dbReference type="Pfam" id="PF08209">
    <property type="entry name" value="Sgf11"/>
    <property type="match status" value="1"/>
</dbReference>
<dbReference type="Pfam" id="PF18519">
    <property type="entry name" value="Sgf11_N"/>
    <property type="match status" value="1"/>
</dbReference>
<keyword id="KW-0010">Activator</keyword>
<keyword id="KW-0156">Chromatin regulator</keyword>
<keyword id="KW-0479">Metal-binding</keyword>
<keyword id="KW-0539">Nucleus</keyword>
<keyword id="KW-1185">Reference proteome</keyword>
<keyword id="KW-0804">Transcription</keyword>
<keyword id="KW-0805">Transcription regulation</keyword>
<keyword id="KW-0862">Zinc</keyword>
<keyword id="KW-0863">Zinc-finger</keyword>
<evidence type="ECO:0000255" key="1">
    <source>
        <dbReference type="HAMAP-Rule" id="MF_03047"/>
    </source>
</evidence>
<proteinExistence type="inferred from homology"/>
<gene>
    <name evidence="1" type="primary">SGF11</name>
    <name type="ordered locus">CAGL0L12738g</name>
</gene>
<sequence>MTEQHETIQSVTDGIYNNLVTSMIHSIVSKETAREKLLRSRYGSYKQYHYDPNSQLDIHGNPKQQDSSQYFYCENCGREVSGNRFAAHLQRCLTRGSRR</sequence>
<accession>Q6FKC2</accession>
<organism>
    <name type="scientific">Candida glabrata (strain ATCC 2001 / BCRC 20586 / JCM 3761 / NBRC 0622 / NRRL Y-65 / CBS 138)</name>
    <name type="common">Yeast</name>
    <name type="synonym">Nakaseomyces glabratus</name>
    <dbReference type="NCBI Taxonomy" id="284593"/>
    <lineage>
        <taxon>Eukaryota</taxon>
        <taxon>Fungi</taxon>
        <taxon>Dikarya</taxon>
        <taxon>Ascomycota</taxon>
        <taxon>Saccharomycotina</taxon>
        <taxon>Saccharomycetes</taxon>
        <taxon>Saccharomycetales</taxon>
        <taxon>Saccharomycetaceae</taxon>
        <taxon>Nakaseomyces</taxon>
    </lineage>
</organism>
<name>SGF11_CANGA</name>
<protein>
    <recommendedName>
        <fullName evidence="1">SAGA-associated factor 11</fullName>
    </recommendedName>
</protein>